<organism>
    <name type="scientific">Salmonella agona (strain SL483)</name>
    <dbReference type="NCBI Taxonomy" id="454166"/>
    <lineage>
        <taxon>Bacteria</taxon>
        <taxon>Pseudomonadati</taxon>
        <taxon>Pseudomonadota</taxon>
        <taxon>Gammaproteobacteria</taxon>
        <taxon>Enterobacterales</taxon>
        <taxon>Enterobacteriaceae</taxon>
        <taxon>Salmonella</taxon>
    </lineage>
</organism>
<gene>
    <name evidence="1" type="primary">adk</name>
    <name type="ordered locus">SeAg_B0533</name>
</gene>
<evidence type="ECO:0000255" key="1">
    <source>
        <dbReference type="HAMAP-Rule" id="MF_00235"/>
    </source>
</evidence>
<keyword id="KW-0067">ATP-binding</keyword>
<keyword id="KW-0963">Cytoplasm</keyword>
<keyword id="KW-0418">Kinase</keyword>
<keyword id="KW-0545">Nucleotide biosynthesis</keyword>
<keyword id="KW-0547">Nucleotide-binding</keyword>
<keyword id="KW-0808">Transferase</keyword>
<dbReference type="EC" id="2.7.4.3" evidence="1"/>
<dbReference type="EMBL" id="CP001138">
    <property type="protein sequence ID" value="ACH51310.1"/>
    <property type="molecule type" value="Genomic_DNA"/>
</dbReference>
<dbReference type="RefSeq" id="WP_001220237.1">
    <property type="nucleotide sequence ID" value="NC_011149.1"/>
</dbReference>
<dbReference type="SMR" id="B5EXN0"/>
<dbReference type="KEGG" id="sea:SeAg_B0533"/>
<dbReference type="HOGENOM" id="CLU_032354_1_2_6"/>
<dbReference type="UniPathway" id="UPA00588">
    <property type="reaction ID" value="UER00649"/>
</dbReference>
<dbReference type="Proteomes" id="UP000008819">
    <property type="component" value="Chromosome"/>
</dbReference>
<dbReference type="GO" id="GO:0005737">
    <property type="term" value="C:cytoplasm"/>
    <property type="evidence" value="ECO:0007669"/>
    <property type="project" value="UniProtKB-SubCell"/>
</dbReference>
<dbReference type="GO" id="GO:0004017">
    <property type="term" value="F:adenylate kinase activity"/>
    <property type="evidence" value="ECO:0007669"/>
    <property type="project" value="UniProtKB-UniRule"/>
</dbReference>
<dbReference type="GO" id="GO:0005524">
    <property type="term" value="F:ATP binding"/>
    <property type="evidence" value="ECO:0007669"/>
    <property type="project" value="UniProtKB-UniRule"/>
</dbReference>
<dbReference type="GO" id="GO:0044209">
    <property type="term" value="P:AMP salvage"/>
    <property type="evidence" value="ECO:0007669"/>
    <property type="project" value="UniProtKB-UniRule"/>
</dbReference>
<dbReference type="CDD" id="cd01428">
    <property type="entry name" value="ADK"/>
    <property type="match status" value="1"/>
</dbReference>
<dbReference type="FunFam" id="3.40.50.300:FF:000106">
    <property type="entry name" value="Adenylate kinase mitochondrial"/>
    <property type="match status" value="1"/>
</dbReference>
<dbReference type="Gene3D" id="3.40.50.300">
    <property type="entry name" value="P-loop containing nucleotide triphosphate hydrolases"/>
    <property type="match status" value="1"/>
</dbReference>
<dbReference type="HAMAP" id="MF_00235">
    <property type="entry name" value="Adenylate_kinase_Adk"/>
    <property type="match status" value="1"/>
</dbReference>
<dbReference type="InterPro" id="IPR006259">
    <property type="entry name" value="Adenyl_kin_sub"/>
</dbReference>
<dbReference type="InterPro" id="IPR000850">
    <property type="entry name" value="Adenylat/UMP-CMP_kin"/>
</dbReference>
<dbReference type="InterPro" id="IPR033690">
    <property type="entry name" value="Adenylat_kinase_CS"/>
</dbReference>
<dbReference type="InterPro" id="IPR007862">
    <property type="entry name" value="Adenylate_kinase_lid-dom"/>
</dbReference>
<dbReference type="InterPro" id="IPR027417">
    <property type="entry name" value="P-loop_NTPase"/>
</dbReference>
<dbReference type="NCBIfam" id="TIGR01351">
    <property type="entry name" value="adk"/>
    <property type="match status" value="1"/>
</dbReference>
<dbReference type="NCBIfam" id="NF001379">
    <property type="entry name" value="PRK00279.1-1"/>
    <property type="match status" value="1"/>
</dbReference>
<dbReference type="NCBIfam" id="NF001380">
    <property type="entry name" value="PRK00279.1-2"/>
    <property type="match status" value="1"/>
</dbReference>
<dbReference type="NCBIfam" id="NF001381">
    <property type="entry name" value="PRK00279.1-3"/>
    <property type="match status" value="1"/>
</dbReference>
<dbReference type="NCBIfam" id="NF011100">
    <property type="entry name" value="PRK14527.1"/>
    <property type="match status" value="1"/>
</dbReference>
<dbReference type="PANTHER" id="PTHR23359">
    <property type="entry name" value="NUCLEOTIDE KINASE"/>
    <property type="match status" value="1"/>
</dbReference>
<dbReference type="Pfam" id="PF00406">
    <property type="entry name" value="ADK"/>
    <property type="match status" value="1"/>
</dbReference>
<dbReference type="Pfam" id="PF05191">
    <property type="entry name" value="ADK_lid"/>
    <property type="match status" value="1"/>
</dbReference>
<dbReference type="PRINTS" id="PR00094">
    <property type="entry name" value="ADENYLTKNASE"/>
</dbReference>
<dbReference type="SUPFAM" id="SSF52540">
    <property type="entry name" value="P-loop containing nucleoside triphosphate hydrolases"/>
    <property type="match status" value="1"/>
</dbReference>
<dbReference type="PROSITE" id="PS00113">
    <property type="entry name" value="ADENYLATE_KINASE"/>
    <property type="match status" value="1"/>
</dbReference>
<feature type="chain" id="PRO_1000100600" description="Adenylate kinase">
    <location>
        <begin position="1"/>
        <end position="214"/>
    </location>
</feature>
<feature type="region of interest" description="NMP" evidence="1">
    <location>
        <begin position="30"/>
        <end position="59"/>
    </location>
</feature>
<feature type="region of interest" description="LID">
    <location>
        <begin position="122"/>
        <end position="159"/>
    </location>
</feature>
<feature type="binding site" evidence="1">
    <location>
        <begin position="10"/>
        <end position="15"/>
    </location>
    <ligand>
        <name>ATP</name>
        <dbReference type="ChEBI" id="CHEBI:30616"/>
    </ligand>
</feature>
<feature type="binding site" evidence="1">
    <location>
        <position position="31"/>
    </location>
    <ligand>
        <name>AMP</name>
        <dbReference type="ChEBI" id="CHEBI:456215"/>
    </ligand>
</feature>
<feature type="binding site" evidence="1">
    <location>
        <position position="36"/>
    </location>
    <ligand>
        <name>AMP</name>
        <dbReference type="ChEBI" id="CHEBI:456215"/>
    </ligand>
</feature>
<feature type="binding site" evidence="1">
    <location>
        <begin position="57"/>
        <end position="59"/>
    </location>
    <ligand>
        <name>AMP</name>
        <dbReference type="ChEBI" id="CHEBI:456215"/>
    </ligand>
</feature>
<feature type="binding site" evidence="1">
    <location>
        <begin position="85"/>
        <end position="88"/>
    </location>
    <ligand>
        <name>AMP</name>
        <dbReference type="ChEBI" id="CHEBI:456215"/>
    </ligand>
</feature>
<feature type="binding site" evidence="1">
    <location>
        <position position="92"/>
    </location>
    <ligand>
        <name>AMP</name>
        <dbReference type="ChEBI" id="CHEBI:456215"/>
    </ligand>
</feature>
<feature type="binding site" evidence="1">
    <location>
        <position position="123"/>
    </location>
    <ligand>
        <name>ATP</name>
        <dbReference type="ChEBI" id="CHEBI:30616"/>
    </ligand>
</feature>
<feature type="binding site" evidence="1">
    <location>
        <begin position="132"/>
        <end position="133"/>
    </location>
    <ligand>
        <name>ATP</name>
        <dbReference type="ChEBI" id="CHEBI:30616"/>
    </ligand>
</feature>
<feature type="binding site" evidence="1">
    <location>
        <position position="156"/>
    </location>
    <ligand>
        <name>AMP</name>
        <dbReference type="ChEBI" id="CHEBI:456215"/>
    </ligand>
</feature>
<feature type="binding site" evidence="1">
    <location>
        <position position="167"/>
    </location>
    <ligand>
        <name>AMP</name>
        <dbReference type="ChEBI" id="CHEBI:456215"/>
    </ligand>
</feature>
<feature type="binding site" evidence="1">
    <location>
        <position position="200"/>
    </location>
    <ligand>
        <name>ATP</name>
        <dbReference type="ChEBI" id="CHEBI:30616"/>
    </ligand>
</feature>
<protein>
    <recommendedName>
        <fullName evidence="1">Adenylate kinase</fullName>
        <shortName evidence="1">AK</shortName>
        <ecNumber evidence="1">2.7.4.3</ecNumber>
    </recommendedName>
    <alternativeName>
        <fullName evidence="1">ATP-AMP transphosphorylase</fullName>
    </alternativeName>
    <alternativeName>
        <fullName evidence="1">ATP:AMP phosphotransferase</fullName>
    </alternativeName>
    <alternativeName>
        <fullName evidence="1">Adenylate monophosphate kinase</fullName>
    </alternativeName>
</protein>
<comment type="function">
    <text evidence="1">Catalyzes the reversible transfer of the terminal phosphate group between ATP and AMP. Plays an important role in cellular energy homeostasis and in adenine nucleotide metabolism.</text>
</comment>
<comment type="catalytic activity">
    <reaction evidence="1">
        <text>AMP + ATP = 2 ADP</text>
        <dbReference type="Rhea" id="RHEA:12973"/>
        <dbReference type="ChEBI" id="CHEBI:30616"/>
        <dbReference type="ChEBI" id="CHEBI:456215"/>
        <dbReference type="ChEBI" id="CHEBI:456216"/>
        <dbReference type="EC" id="2.7.4.3"/>
    </reaction>
</comment>
<comment type="pathway">
    <text evidence="1">Purine metabolism; AMP biosynthesis via salvage pathway; AMP from ADP: step 1/1.</text>
</comment>
<comment type="subunit">
    <text evidence="1">Monomer.</text>
</comment>
<comment type="subcellular location">
    <subcellularLocation>
        <location evidence="1">Cytoplasm</location>
    </subcellularLocation>
</comment>
<comment type="domain">
    <text evidence="1">Consists of three domains, a large central CORE domain and two small peripheral domains, NMPbind and LID, which undergo movements during catalysis. The LID domain closes over the site of phosphoryl transfer upon ATP binding. Assembling and dissambling the active center during each catalytic cycle provides an effective means to prevent ATP hydrolysis.</text>
</comment>
<comment type="similarity">
    <text evidence="1">Belongs to the adenylate kinase family.</text>
</comment>
<reference key="1">
    <citation type="journal article" date="2011" name="J. Bacteriol.">
        <title>Comparative genomics of 28 Salmonella enterica isolates: evidence for CRISPR-mediated adaptive sublineage evolution.</title>
        <authorList>
            <person name="Fricke W.F."/>
            <person name="Mammel M.K."/>
            <person name="McDermott P.F."/>
            <person name="Tartera C."/>
            <person name="White D.G."/>
            <person name="Leclerc J.E."/>
            <person name="Ravel J."/>
            <person name="Cebula T.A."/>
        </authorList>
    </citation>
    <scope>NUCLEOTIDE SEQUENCE [LARGE SCALE GENOMIC DNA]</scope>
    <source>
        <strain>SL483</strain>
    </source>
</reference>
<name>KAD_SALA4</name>
<sequence>MRIILLGAPGAGKGTQAQFIMEKYGIPQISTGDMLRAAVKSGSELGKQAKDIMDAGKLVTDELVIALVKERIAQEDCRNGFLLDGFPRTIPQADAMKEAGIVVDYVLEFDVPDELIVDRIVGRRVHAASGRVYHVKFNPPKVEGKDDVTGEDLTTRKDDQEETVRKRLVEYHQMTAPLIGYYQKEAEAGNTKYAKVDGTQAVADVRAALEKILG</sequence>
<proteinExistence type="inferred from homology"/>
<accession>B5EXN0</accession>